<evidence type="ECO:0000255" key="1"/>
<evidence type="ECO:0000305" key="2"/>
<feature type="chain" id="PRO_0000169253" description="Uncharacterized protein YfhR">
    <location>
        <begin position="1"/>
        <end position="284"/>
    </location>
</feature>
<feature type="transmembrane region" description="Helical" evidence="1">
    <location>
        <begin position="12"/>
        <end position="32"/>
    </location>
</feature>
<organism>
    <name type="scientific">Escherichia coli O157:H7</name>
    <dbReference type="NCBI Taxonomy" id="83334"/>
    <lineage>
        <taxon>Bacteria</taxon>
        <taxon>Pseudomonadati</taxon>
        <taxon>Pseudomonadota</taxon>
        <taxon>Gammaproteobacteria</taxon>
        <taxon>Enterobacterales</taxon>
        <taxon>Enterobacteriaceae</taxon>
        <taxon>Escherichia</taxon>
    </lineage>
</organism>
<name>YHFR_ECO57</name>
<reference key="1">
    <citation type="journal article" date="2001" name="Nature">
        <title>Genome sequence of enterohaemorrhagic Escherichia coli O157:H7.</title>
        <authorList>
            <person name="Perna N.T."/>
            <person name="Plunkett G. III"/>
            <person name="Burland V."/>
            <person name="Mau B."/>
            <person name="Glasner J.D."/>
            <person name="Rose D.J."/>
            <person name="Mayhew G.F."/>
            <person name="Evans P.S."/>
            <person name="Gregor J."/>
            <person name="Kirkpatrick H.A."/>
            <person name="Posfai G."/>
            <person name="Hackett J."/>
            <person name="Klink S."/>
            <person name="Boutin A."/>
            <person name="Shao Y."/>
            <person name="Miller L."/>
            <person name="Grotbeck E.J."/>
            <person name="Davis N.W."/>
            <person name="Lim A."/>
            <person name="Dimalanta E.T."/>
            <person name="Potamousis K."/>
            <person name="Apodaca J."/>
            <person name="Anantharaman T.S."/>
            <person name="Lin J."/>
            <person name="Yen G."/>
            <person name="Schwartz D.C."/>
            <person name="Welch R.A."/>
            <person name="Blattner F.R."/>
        </authorList>
    </citation>
    <scope>NUCLEOTIDE SEQUENCE [LARGE SCALE GENOMIC DNA]</scope>
    <source>
        <strain>O157:H7 / EDL933 / ATCC 700927 / EHEC</strain>
    </source>
</reference>
<reference key="2">
    <citation type="journal article" date="2001" name="DNA Res.">
        <title>Complete genome sequence of enterohemorrhagic Escherichia coli O157:H7 and genomic comparison with a laboratory strain K-12.</title>
        <authorList>
            <person name="Hayashi T."/>
            <person name="Makino K."/>
            <person name="Ohnishi M."/>
            <person name="Kurokawa K."/>
            <person name="Ishii K."/>
            <person name="Yokoyama K."/>
            <person name="Han C.-G."/>
            <person name="Ohtsubo E."/>
            <person name="Nakayama K."/>
            <person name="Murata T."/>
            <person name="Tanaka M."/>
            <person name="Tobe T."/>
            <person name="Iida T."/>
            <person name="Takami H."/>
            <person name="Honda T."/>
            <person name="Sasakawa C."/>
            <person name="Ogasawara N."/>
            <person name="Yasunaga T."/>
            <person name="Kuhara S."/>
            <person name="Shiba T."/>
            <person name="Hattori M."/>
            <person name="Shinagawa H."/>
        </authorList>
    </citation>
    <scope>NUCLEOTIDE SEQUENCE [LARGE SCALE GENOMIC DNA]</scope>
    <source>
        <strain>O157:H7 / Sakai / RIMD 0509952 / EHEC</strain>
    </source>
</reference>
<accession>Q8XA81</accession>
<protein>
    <recommendedName>
        <fullName>Uncharacterized protein YfhR</fullName>
    </recommendedName>
</protein>
<comment type="subcellular location">
    <subcellularLocation>
        <location evidence="2">Membrane</location>
        <topology evidence="2">Single-pass membrane protein</topology>
    </subcellularLocation>
</comment>
<comment type="similarity">
    <text evidence="2">Belongs to the serine esterase family.</text>
</comment>
<comment type="sequence caution" evidence="2">
    <conflict type="erroneous initiation">
        <sequence resource="EMBL-CDS" id="AAG57647"/>
    </conflict>
    <text>Extended N-terminus.</text>
</comment>
<keyword id="KW-0472">Membrane</keyword>
<keyword id="KW-1185">Reference proteome</keyword>
<keyword id="KW-0812">Transmembrane</keyword>
<keyword id="KW-1133">Transmembrane helix</keyword>
<gene>
    <name type="primary">yhfR</name>
    <name type="ordered locus">Z3802</name>
    <name type="ordered locus">ECs3400</name>
</gene>
<proteinExistence type="inferred from homology"/>
<dbReference type="EMBL" id="AE005174">
    <property type="protein sequence ID" value="AAG57647.1"/>
    <property type="status" value="ALT_INIT"/>
    <property type="molecule type" value="Genomic_DNA"/>
</dbReference>
<dbReference type="EMBL" id="BA000007">
    <property type="protein sequence ID" value="BAB36823.2"/>
    <property type="molecule type" value="Genomic_DNA"/>
</dbReference>
<dbReference type="PIR" id="C85898">
    <property type="entry name" value="C85898"/>
</dbReference>
<dbReference type="PIR" id="H91053">
    <property type="entry name" value="H91053"/>
</dbReference>
<dbReference type="RefSeq" id="WP_001301747.1">
    <property type="nucleotide sequence ID" value="NZ_VOAI01000001.1"/>
</dbReference>
<dbReference type="SMR" id="Q8XA81"/>
<dbReference type="STRING" id="155864.Z3802"/>
<dbReference type="ESTHER" id="ecoli-YfhR">
    <property type="family name" value="ABHD13-BEM46"/>
</dbReference>
<dbReference type="MEROPS" id="S09.A36"/>
<dbReference type="KEGG" id="ece:Z3802"/>
<dbReference type="KEGG" id="ecs:ECs_3400"/>
<dbReference type="PATRIC" id="fig|386585.9.peg.3552"/>
<dbReference type="eggNOG" id="COG1073">
    <property type="taxonomic scope" value="Bacteria"/>
</dbReference>
<dbReference type="HOGENOM" id="CLU_029375_2_1_6"/>
<dbReference type="OMA" id="QYWTSED"/>
<dbReference type="Proteomes" id="UP000000558">
    <property type="component" value="Chromosome"/>
</dbReference>
<dbReference type="Proteomes" id="UP000002519">
    <property type="component" value="Chromosome"/>
</dbReference>
<dbReference type="GO" id="GO:0016020">
    <property type="term" value="C:membrane"/>
    <property type="evidence" value="ECO:0007669"/>
    <property type="project" value="UniProtKB-SubCell"/>
</dbReference>
<dbReference type="Gene3D" id="3.40.50.1820">
    <property type="entry name" value="alpha/beta hydrolase"/>
    <property type="match status" value="1"/>
</dbReference>
<dbReference type="InterPro" id="IPR029058">
    <property type="entry name" value="AB_hydrolase_fold"/>
</dbReference>
<dbReference type="InterPro" id="IPR022742">
    <property type="entry name" value="Hydrolase_4"/>
</dbReference>
<dbReference type="PANTHER" id="PTHR12277">
    <property type="entry name" value="ALPHA/BETA HYDROLASE DOMAIN-CONTAINING PROTEIN"/>
    <property type="match status" value="1"/>
</dbReference>
<dbReference type="PANTHER" id="PTHR12277:SF81">
    <property type="entry name" value="PROTEIN ABHD13"/>
    <property type="match status" value="1"/>
</dbReference>
<dbReference type="Pfam" id="PF12146">
    <property type="entry name" value="Hydrolase_4"/>
    <property type="match status" value="1"/>
</dbReference>
<dbReference type="SUPFAM" id="SSF53474">
    <property type="entry name" value="alpha/beta-Hydrolases"/>
    <property type="match status" value="1"/>
</dbReference>
<sequence length="284" mass="31443">MALPVNKRVPKILFILFVVAFCVYLVPRVAINFFYYPDDKIYGPDPWSAESVEFTAKDGTRLQGWFIPSSTGPADNAIATIIHAHGNAGNMSAHWPLVSWLPERNFNVFMFDYRGFGKSKGTPSQAGLLDDTQSAINVVRHRSDVNPQRLVLFGQSIGGANILAVIGQGDREGIRAVILDSTFASYATIANQMIPGSGYLLDESYSGENYIASVSPIPLLLIHGKADHVIPWQHSEKLYSLAKEPKRLILIPDGEHIDAFSDRHGDVYREQMVNFILSALNPQN</sequence>